<evidence type="ECO:0000250" key="1"/>
<evidence type="ECO:0000255" key="2">
    <source>
        <dbReference type="PROSITE-ProRule" id="PRU00227"/>
    </source>
</evidence>
<evidence type="ECO:0000256" key="3">
    <source>
        <dbReference type="SAM" id="MobiDB-lite"/>
    </source>
</evidence>
<evidence type="ECO:0000305" key="4"/>
<feature type="chain" id="PRO_0000406437" description="Transcription activator of gluconeogenesis CHGG_09150">
    <location>
        <begin position="1"/>
        <end position="660"/>
    </location>
</feature>
<feature type="domain" description="PAS">
    <location>
        <begin position="455"/>
        <end position="526"/>
    </location>
</feature>
<feature type="DNA-binding region" description="Zn(2)-C6 fungal-type" evidence="2">
    <location>
        <begin position="59"/>
        <end position="87"/>
    </location>
</feature>
<feature type="region of interest" description="Disordered" evidence="3">
    <location>
        <begin position="1"/>
        <end position="52"/>
    </location>
</feature>
<feature type="region of interest" description="Disordered" evidence="3">
    <location>
        <begin position="98"/>
        <end position="144"/>
    </location>
</feature>
<feature type="region of interest" description="Disordered" evidence="3">
    <location>
        <begin position="170"/>
        <end position="191"/>
    </location>
</feature>
<feature type="region of interest" description="Disordered" evidence="3">
    <location>
        <begin position="319"/>
        <end position="368"/>
    </location>
</feature>
<feature type="region of interest" description="Disordered" evidence="3">
    <location>
        <begin position="587"/>
        <end position="613"/>
    </location>
</feature>
<feature type="compositionally biased region" description="Acidic residues" evidence="3">
    <location>
        <begin position="1"/>
        <end position="12"/>
    </location>
</feature>
<feature type="compositionally biased region" description="Basic and acidic residues" evidence="3">
    <location>
        <begin position="13"/>
        <end position="24"/>
    </location>
</feature>
<feature type="compositionally biased region" description="Basic and acidic residues" evidence="3">
    <location>
        <begin position="36"/>
        <end position="49"/>
    </location>
</feature>
<feature type="compositionally biased region" description="Polar residues" evidence="3">
    <location>
        <begin position="129"/>
        <end position="144"/>
    </location>
</feature>
<feature type="compositionally biased region" description="Low complexity" evidence="3">
    <location>
        <begin position="173"/>
        <end position="184"/>
    </location>
</feature>
<feature type="compositionally biased region" description="Polar residues" evidence="3">
    <location>
        <begin position="320"/>
        <end position="332"/>
    </location>
</feature>
<feature type="compositionally biased region" description="Polar residues" evidence="3">
    <location>
        <begin position="344"/>
        <end position="368"/>
    </location>
</feature>
<reference key="1">
    <citation type="journal article" date="2015" name="Genome Announc.">
        <title>Draft genome sequence of the cellulolytic fungus Chaetomium globosum.</title>
        <authorList>
            <person name="Cuomo C.A."/>
            <person name="Untereiner W.A."/>
            <person name="Ma L.-J."/>
            <person name="Grabherr M."/>
            <person name="Birren B.W."/>
        </authorList>
    </citation>
    <scope>NUCLEOTIDE SEQUENCE [LARGE SCALE GENOMIC DNA]</scope>
    <source>
        <strain>ATCC 6205 / CBS 148.51 / DSM 1962 / NBRC 6347 / NRRL 1970</strain>
    </source>
</reference>
<organism>
    <name type="scientific">Chaetomium globosum (strain ATCC 6205 / CBS 148.51 / DSM 1962 / NBRC 6347 / NRRL 1970)</name>
    <name type="common">Soil fungus</name>
    <dbReference type="NCBI Taxonomy" id="306901"/>
    <lineage>
        <taxon>Eukaryota</taxon>
        <taxon>Fungi</taxon>
        <taxon>Dikarya</taxon>
        <taxon>Ascomycota</taxon>
        <taxon>Pezizomycotina</taxon>
        <taxon>Sordariomycetes</taxon>
        <taxon>Sordariomycetidae</taxon>
        <taxon>Sordariales</taxon>
        <taxon>Chaetomiaceae</taxon>
        <taxon>Chaetomium</taxon>
    </lineage>
</organism>
<name>ACUK_CHAGB</name>
<protein>
    <recommendedName>
        <fullName>Transcription activator of gluconeogenesis CHGG_09150</fullName>
    </recommendedName>
</protein>
<keyword id="KW-0010">Activator</keyword>
<keyword id="KW-0238">DNA-binding</keyword>
<keyword id="KW-0312">Gluconeogenesis</keyword>
<keyword id="KW-0479">Metal-binding</keyword>
<keyword id="KW-0539">Nucleus</keyword>
<keyword id="KW-1185">Reference proteome</keyword>
<keyword id="KW-0804">Transcription</keyword>
<keyword id="KW-0805">Transcription regulation</keyword>
<keyword id="KW-0862">Zinc</keyword>
<comment type="function">
    <text evidence="1">Transcription factor which regulates nonfermentable carbon utilization. Activator of gluconeogenetic genes (By similarity).</text>
</comment>
<comment type="subcellular location">
    <subcellularLocation>
        <location evidence="2">Nucleus</location>
    </subcellularLocation>
</comment>
<comment type="similarity">
    <text evidence="4">Belongs to the ERT1/acuK family.</text>
</comment>
<sequence length="660" mass="72331">MSDSENEYDETDQLVKEEDEKMSDQRLTSEGADTSAEPKKKYDPKDPLRPRRKKARRACFACQRAHLTCGDERPCQRCIKRNLMESCQDGVRKKAKYLHDAPPEALRPVLGPNYNPNPTPRQNGHRHPSIQTSEASSNQGTFFSQSPATQFPLFSAAQTPIGNLAETLPFANQQSPTSPSFQTSGNPQISGMTVPQVSSPMTNFGTLPFDPSDPNIYNFNLEGLNFGSQYGAMEFGMLGHMSSGAAETPPGDATMARSASGSLGFGPGVFGNGVNQFDNVYEGNILDGFLGLDANHNGLYSQGNLQHGLPHAYAIAAGPTSIQSPSTDTNSPQPTPLGFEGSPTMATFSTTPGSKPANQQRPSTRQSNAIAKLGQQSVLGKRQRDPSFVYDTVKEPFGYVSSFHKLFILIQKRFTAAHTSRIAKSLASIRPSLMASTKNLTKQDLVFMEKYFQRSLLEYEEFMHQCSSPTLACRRTGEVAIVNKEFCALTGWTKDVLLGKEPNLNVNLGGSASANTNSKARVGLATPRLKSLNTESGGSTDGPRPVYLAELLDHESVVEFYEDYSQLAFNDSRGHKTRKCRLLKYRAPDKDDGTGESSTDGQLPQKDPRNSILSNRVAKIDGEHGISKLERDGKLECSYTWTIKRDVFDMPMLFVINVST</sequence>
<proteinExistence type="inferred from homology"/>
<accession>Q2GSA4</accession>
<dbReference type="EMBL" id="CH408034">
    <property type="protein sequence ID" value="EAQ85136.1"/>
    <property type="molecule type" value="Genomic_DNA"/>
</dbReference>
<dbReference type="RefSeq" id="XP_001227077.1">
    <property type="nucleotide sequence ID" value="XM_001227076.1"/>
</dbReference>
<dbReference type="SMR" id="Q2GSA4"/>
<dbReference type="FunCoup" id="Q2GSA4">
    <property type="interactions" value="173"/>
</dbReference>
<dbReference type="GeneID" id="4395861"/>
<dbReference type="VEuPathDB" id="FungiDB:CHGG_09150"/>
<dbReference type="eggNOG" id="ENOG502R1M5">
    <property type="taxonomic scope" value="Eukaryota"/>
</dbReference>
<dbReference type="HOGENOM" id="CLU_010748_1_0_1"/>
<dbReference type="InParanoid" id="Q2GSA4"/>
<dbReference type="OMA" id="VMTTCKL"/>
<dbReference type="OrthoDB" id="2538135at2759"/>
<dbReference type="Proteomes" id="UP000001056">
    <property type="component" value="Unassembled WGS sequence"/>
</dbReference>
<dbReference type="GO" id="GO:0005634">
    <property type="term" value="C:nucleus"/>
    <property type="evidence" value="ECO:0007669"/>
    <property type="project" value="UniProtKB-SubCell"/>
</dbReference>
<dbReference type="GO" id="GO:0000981">
    <property type="term" value="F:DNA-binding transcription factor activity, RNA polymerase II-specific"/>
    <property type="evidence" value="ECO:0007669"/>
    <property type="project" value="InterPro"/>
</dbReference>
<dbReference type="GO" id="GO:0000977">
    <property type="term" value="F:RNA polymerase II transcription regulatory region sequence-specific DNA binding"/>
    <property type="evidence" value="ECO:0007669"/>
    <property type="project" value="TreeGrafter"/>
</dbReference>
<dbReference type="GO" id="GO:0008270">
    <property type="term" value="F:zinc ion binding"/>
    <property type="evidence" value="ECO:0007669"/>
    <property type="project" value="InterPro"/>
</dbReference>
<dbReference type="GO" id="GO:0009267">
    <property type="term" value="P:cellular response to starvation"/>
    <property type="evidence" value="ECO:0007669"/>
    <property type="project" value="TreeGrafter"/>
</dbReference>
<dbReference type="GO" id="GO:0006094">
    <property type="term" value="P:gluconeogenesis"/>
    <property type="evidence" value="ECO:0007669"/>
    <property type="project" value="UniProtKB-KW"/>
</dbReference>
<dbReference type="CDD" id="cd00067">
    <property type="entry name" value="GAL4"/>
    <property type="match status" value="1"/>
</dbReference>
<dbReference type="Gene3D" id="4.10.240.10">
    <property type="entry name" value="Zn(2)-C6 fungal-type DNA-binding domain"/>
    <property type="match status" value="1"/>
</dbReference>
<dbReference type="InterPro" id="IPR050335">
    <property type="entry name" value="ERT1_acuK_gluconeogen_tf"/>
</dbReference>
<dbReference type="InterPro" id="IPR056751">
    <property type="entry name" value="PAS_13"/>
</dbReference>
<dbReference type="InterPro" id="IPR036864">
    <property type="entry name" value="Zn2-C6_fun-type_DNA-bd_sf"/>
</dbReference>
<dbReference type="InterPro" id="IPR001138">
    <property type="entry name" value="Zn2Cys6_DnaBD"/>
</dbReference>
<dbReference type="PANTHER" id="PTHR47659:SF1">
    <property type="entry name" value="TRANSCRIPTION ACTIVATOR OF GLUCONEOGENESIS ERT1"/>
    <property type="match status" value="1"/>
</dbReference>
<dbReference type="PANTHER" id="PTHR47659">
    <property type="entry name" value="ZN(II)2CYS6 TRANSCRIPTION FACTOR (EUROFUNG)-RELATED"/>
    <property type="match status" value="1"/>
</dbReference>
<dbReference type="Pfam" id="PF24990">
    <property type="entry name" value="PAS_13"/>
    <property type="match status" value="1"/>
</dbReference>
<dbReference type="SMART" id="SM00066">
    <property type="entry name" value="GAL4"/>
    <property type="match status" value="1"/>
</dbReference>
<dbReference type="SUPFAM" id="SSF57701">
    <property type="entry name" value="Zn2/Cys6 DNA-binding domain"/>
    <property type="match status" value="1"/>
</dbReference>
<dbReference type="PROSITE" id="PS50048">
    <property type="entry name" value="ZN2_CY6_FUNGAL_2"/>
    <property type="match status" value="1"/>
</dbReference>
<gene>
    <name type="ORF">CHGG_09150</name>
</gene>